<evidence type="ECO:0000255" key="1">
    <source>
        <dbReference type="HAMAP-Rule" id="MF_01347"/>
    </source>
</evidence>
<keyword id="KW-0066">ATP synthesis</keyword>
<keyword id="KW-0067">ATP-binding</keyword>
<keyword id="KW-0139">CF(1)</keyword>
<keyword id="KW-0150">Chloroplast</keyword>
<keyword id="KW-0375">Hydrogen ion transport</keyword>
<keyword id="KW-0406">Ion transport</keyword>
<keyword id="KW-0472">Membrane</keyword>
<keyword id="KW-0547">Nucleotide-binding</keyword>
<keyword id="KW-0934">Plastid</keyword>
<keyword id="KW-1185">Reference proteome</keyword>
<keyword id="KW-0793">Thylakoid</keyword>
<keyword id="KW-1278">Translocase</keyword>
<keyword id="KW-0813">Transport</keyword>
<geneLocation type="chloroplast"/>
<name>ATPB_NICSY</name>
<organism>
    <name type="scientific">Nicotiana sylvestris</name>
    <name type="common">Wood tobacco</name>
    <name type="synonym">South American tobacco</name>
    <dbReference type="NCBI Taxonomy" id="4096"/>
    <lineage>
        <taxon>Eukaryota</taxon>
        <taxon>Viridiplantae</taxon>
        <taxon>Streptophyta</taxon>
        <taxon>Embryophyta</taxon>
        <taxon>Tracheophyta</taxon>
        <taxon>Spermatophyta</taxon>
        <taxon>Magnoliopsida</taxon>
        <taxon>eudicotyledons</taxon>
        <taxon>Gunneridae</taxon>
        <taxon>Pentapetalae</taxon>
        <taxon>asterids</taxon>
        <taxon>lamiids</taxon>
        <taxon>Solanales</taxon>
        <taxon>Solanaceae</taxon>
        <taxon>Nicotianoideae</taxon>
        <taxon>Nicotianeae</taxon>
        <taxon>Nicotiana</taxon>
    </lineage>
</organism>
<comment type="function">
    <text evidence="1">Produces ATP from ADP in the presence of a proton gradient across the membrane. The catalytic sites are hosted primarily by the beta subunits.</text>
</comment>
<comment type="catalytic activity">
    <reaction evidence="1">
        <text>ATP + H2O + 4 H(+)(in) = ADP + phosphate + 5 H(+)(out)</text>
        <dbReference type="Rhea" id="RHEA:57720"/>
        <dbReference type="ChEBI" id="CHEBI:15377"/>
        <dbReference type="ChEBI" id="CHEBI:15378"/>
        <dbReference type="ChEBI" id="CHEBI:30616"/>
        <dbReference type="ChEBI" id="CHEBI:43474"/>
        <dbReference type="ChEBI" id="CHEBI:456216"/>
        <dbReference type="EC" id="7.1.2.2"/>
    </reaction>
</comment>
<comment type="subunit">
    <text evidence="1">F-type ATPases have 2 components, CF(1) - the catalytic core - and CF(0) - the membrane proton channel. CF(1) has five subunits: alpha(3), beta(3), gamma(1), delta(1), epsilon(1). CF(0) has four main subunits: a(1), b(1), b'(1) and c(9-12).</text>
</comment>
<comment type="subcellular location">
    <subcellularLocation>
        <location evidence="1">Plastid</location>
        <location evidence="1">Chloroplast thylakoid membrane</location>
        <topology evidence="1">Peripheral membrane protein</topology>
    </subcellularLocation>
</comment>
<comment type="similarity">
    <text evidence="1">Belongs to the ATPase alpha/beta chains family.</text>
</comment>
<accession>Q3C1J5</accession>
<sequence>MRINPTTSGSGVSTLEKKNPGRVVQIIGPVLDVAFPPGKMPNIYNALVVQGRDSVGQPINVACEVQQLLGNNRVRAVAMSATEGLTRGMEVIDTGAPISVPVGGATLGRIFNVLGEPVDNLGPVDTSTTSPIHRSAPAFIQLDTKLSIFETGIKVVDLLAPYRRGGKIGLFGGAGVGKTVLIMELINNIAKAHGGVSVFGGVGERTREGNDLYMEMKESGVINEENIAESKVALVYGQMNEPPGARMRVGLTALTMAEYFRDVNEQDVLLFIDNIFRFVQAGSEVSALLGRMPSAVGYQPTLSTEMGSLQERITSTKEGSITSIQAVYVPADDLTDPAPATTFAHLDATTVLSRGLAAKGIYPAVDPLDSTSTMLQPRIVGEEHYETAQRVKQTLQRYKELQDIIAILGLDELSEEDRLLVARARKIERFLSQPFFVAEVFTGSPGKYVGLAETIRGFQLILSGELDGLPEQAFYLVGNIDEATAKAMNLEMESNLKK</sequence>
<proteinExistence type="inferred from homology"/>
<reference key="1">
    <citation type="journal article" date="2006" name="Mol. Genet. Genomics">
        <title>The chloroplast genome of Nicotiana sylvestris and Nicotiana tomentosiformis: complete sequencing confirms that the Nicotiana sylvestris progenitor is the maternal genome donor of Nicotiana tabacum.</title>
        <authorList>
            <person name="Yukawa M."/>
            <person name="Tsudzuki T."/>
            <person name="Sugiura M."/>
        </authorList>
    </citation>
    <scope>NUCLEOTIDE SEQUENCE [LARGE SCALE GENOMIC DNA]</scope>
</reference>
<protein>
    <recommendedName>
        <fullName evidence="1">ATP synthase subunit beta, chloroplastic</fullName>
        <ecNumber evidence="1">7.1.2.2</ecNumber>
    </recommendedName>
    <alternativeName>
        <fullName evidence="1">ATP synthase F1 sector subunit beta</fullName>
    </alternativeName>
    <alternativeName>
        <fullName evidence="1">F-ATPase subunit beta</fullName>
    </alternativeName>
</protein>
<gene>
    <name evidence="1" type="primary">atpB</name>
</gene>
<feature type="chain" id="PRO_0000254498" description="ATP synthase subunit beta, chloroplastic">
    <location>
        <begin position="1"/>
        <end position="498"/>
    </location>
</feature>
<feature type="binding site" evidence="1">
    <location>
        <begin position="172"/>
        <end position="179"/>
    </location>
    <ligand>
        <name>ATP</name>
        <dbReference type="ChEBI" id="CHEBI:30616"/>
    </ligand>
</feature>
<dbReference type="EC" id="7.1.2.2" evidence="1"/>
<dbReference type="EMBL" id="AB237912">
    <property type="protein sequence ID" value="BAE46658.1"/>
    <property type="molecule type" value="Genomic_DNA"/>
</dbReference>
<dbReference type="RefSeq" id="YP_358683.1">
    <property type="nucleotide sequence ID" value="NC_007500.1"/>
</dbReference>
<dbReference type="SMR" id="Q3C1J5"/>
<dbReference type="GeneID" id="3735050"/>
<dbReference type="KEGG" id="nsy:3735050"/>
<dbReference type="OrthoDB" id="6501at4085"/>
<dbReference type="Proteomes" id="UP000189701">
    <property type="component" value="Chloroplast Pltd"/>
</dbReference>
<dbReference type="GO" id="GO:0009535">
    <property type="term" value="C:chloroplast thylakoid membrane"/>
    <property type="evidence" value="ECO:0007669"/>
    <property type="project" value="UniProtKB-SubCell"/>
</dbReference>
<dbReference type="GO" id="GO:0005739">
    <property type="term" value="C:mitochondrion"/>
    <property type="evidence" value="ECO:0007669"/>
    <property type="project" value="GOC"/>
</dbReference>
<dbReference type="GO" id="GO:0045259">
    <property type="term" value="C:proton-transporting ATP synthase complex"/>
    <property type="evidence" value="ECO:0007669"/>
    <property type="project" value="UniProtKB-KW"/>
</dbReference>
<dbReference type="GO" id="GO:0005524">
    <property type="term" value="F:ATP binding"/>
    <property type="evidence" value="ECO:0007669"/>
    <property type="project" value="UniProtKB-UniRule"/>
</dbReference>
<dbReference type="GO" id="GO:0016887">
    <property type="term" value="F:ATP hydrolysis activity"/>
    <property type="evidence" value="ECO:0007669"/>
    <property type="project" value="InterPro"/>
</dbReference>
<dbReference type="GO" id="GO:0046933">
    <property type="term" value="F:proton-transporting ATP synthase activity, rotational mechanism"/>
    <property type="evidence" value="ECO:0007669"/>
    <property type="project" value="UniProtKB-UniRule"/>
</dbReference>
<dbReference type="GO" id="GO:0042776">
    <property type="term" value="P:proton motive force-driven mitochondrial ATP synthesis"/>
    <property type="evidence" value="ECO:0007669"/>
    <property type="project" value="TreeGrafter"/>
</dbReference>
<dbReference type="CDD" id="cd18110">
    <property type="entry name" value="ATP-synt_F1_beta_C"/>
    <property type="match status" value="1"/>
</dbReference>
<dbReference type="CDD" id="cd18115">
    <property type="entry name" value="ATP-synt_F1_beta_N"/>
    <property type="match status" value="1"/>
</dbReference>
<dbReference type="CDD" id="cd01133">
    <property type="entry name" value="F1-ATPase_beta_CD"/>
    <property type="match status" value="1"/>
</dbReference>
<dbReference type="FunFam" id="1.10.1140.10:FF:000001">
    <property type="entry name" value="ATP synthase subunit beta"/>
    <property type="match status" value="1"/>
</dbReference>
<dbReference type="FunFam" id="3.40.50.12240:FF:000006">
    <property type="entry name" value="ATP synthase subunit beta"/>
    <property type="match status" value="1"/>
</dbReference>
<dbReference type="FunFam" id="3.40.50.300:FF:000004">
    <property type="entry name" value="ATP synthase subunit beta"/>
    <property type="match status" value="1"/>
</dbReference>
<dbReference type="FunFam" id="2.40.10.170:FF:000002">
    <property type="entry name" value="ATP synthase subunit beta, chloroplastic"/>
    <property type="match status" value="1"/>
</dbReference>
<dbReference type="Gene3D" id="2.40.10.170">
    <property type="match status" value="1"/>
</dbReference>
<dbReference type="Gene3D" id="1.10.1140.10">
    <property type="entry name" value="Bovine Mitochondrial F1-atpase, Atp Synthase Beta Chain, Chain D, domain 3"/>
    <property type="match status" value="1"/>
</dbReference>
<dbReference type="Gene3D" id="3.40.50.300">
    <property type="entry name" value="P-loop containing nucleotide triphosphate hydrolases"/>
    <property type="match status" value="1"/>
</dbReference>
<dbReference type="HAMAP" id="MF_01347">
    <property type="entry name" value="ATP_synth_beta_bact"/>
    <property type="match status" value="1"/>
</dbReference>
<dbReference type="InterPro" id="IPR003593">
    <property type="entry name" value="AAA+_ATPase"/>
</dbReference>
<dbReference type="InterPro" id="IPR055190">
    <property type="entry name" value="ATP-synt_VA_C"/>
</dbReference>
<dbReference type="InterPro" id="IPR005722">
    <property type="entry name" value="ATP_synth_F1_bsu"/>
</dbReference>
<dbReference type="InterPro" id="IPR020003">
    <property type="entry name" value="ATPase_a/bsu_AS"/>
</dbReference>
<dbReference type="InterPro" id="IPR050053">
    <property type="entry name" value="ATPase_alpha/beta_chains"/>
</dbReference>
<dbReference type="InterPro" id="IPR004100">
    <property type="entry name" value="ATPase_F1/V1/A1_a/bsu_N"/>
</dbReference>
<dbReference type="InterPro" id="IPR036121">
    <property type="entry name" value="ATPase_F1/V1/A1_a/bsu_N_sf"/>
</dbReference>
<dbReference type="InterPro" id="IPR000194">
    <property type="entry name" value="ATPase_F1/V1/A1_a/bsu_nucl-bd"/>
</dbReference>
<dbReference type="InterPro" id="IPR024034">
    <property type="entry name" value="ATPase_F1/V1_b/a_C"/>
</dbReference>
<dbReference type="InterPro" id="IPR027417">
    <property type="entry name" value="P-loop_NTPase"/>
</dbReference>
<dbReference type="NCBIfam" id="TIGR01039">
    <property type="entry name" value="atpD"/>
    <property type="match status" value="1"/>
</dbReference>
<dbReference type="PANTHER" id="PTHR15184">
    <property type="entry name" value="ATP SYNTHASE"/>
    <property type="match status" value="1"/>
</dbReference>
<dbReference type="PANTHER" id="PTHR15184:SF71">
    <property type="entry name" value="ATP SYNTHASE SUBUNIT BETA, MITOCHONDRIAL"/>
    <property type="match status" value="1"/>
</dbReference>
<dbReference type="Pfam" id="PF00006">
    <property type="entry name" value="ATP-synt_ab"/>
    <property type="match status" value="1"/>
</dbReference>
<dbReference type="Pfam" id="PF02874">
    <property type="entry name" value="ATP-synt_ab_N"/>
    <property type="match status" value="1"/>
</dbReference>
<dbReference type="Pfam" id="PF22919">
    <property type="entry name" value="ATP-synt_VA_C"/>
    <property type="match status" value="1"/>
</dbReference>
<dbReference type="SMART" id="SM00382">
    <property type="entry name" value="AAA"/>
    <property type="match status" value="1"/>
</dbReference>
<dbReference type="SUPFAM" id="SSF47917">
    <property type="entry name" value="C-terminal domain of alpha and beta subunits of F1 ATP synthase"/>
    <property type="match status" value="1"/>
</dbReference>
<dbReference type="SUPFAM" id="SSF50615">
    <property type="entry name" value="N-terminal domain of alpha and beta subunits of F1 ATP synthase"/>
    <property type="match status" value="1"/>
</dbReference>
<dbReference type="SUPFAM" id="SSF52540">
    <property type="entry name" value="P-loop containing nucleoside triphosphate hydrolases"/>
    <property type="match status" value="1"/>
</dbReference>
<dbReference type="PROSITE" id="PS00152">
    <property type="entry name" value="ATPASE_ALPHA_BETA"/>
    <property type="match status" value="1"/>
</dbReference>